<gene>
    <name type="primary">pyrG</name>
</gene>
<reference key="1">
    <citation type="submission" date="2001-07" db="EMBL/GenBank/DDBJ databases">
        <title>Aspergillus kawachii pyrG gene for orotidine-5'-phosphate decarboxylase, complete cds.</title>
        <authorList>
            <person name="Iwashita K."/>
            <person name="Ito K."/>
        </authorList>
    </citation>
    <scope>NUCLEOTIDE SEQUENCE [GENOMIC DNA]</scope>
</reference>
<protein>
    <recommendedName>
        <fullName>Orotidine 5'-phosphate decarboxylase</fullName>
        <ecNumber>4.1.1.23</ecNumber>
    </recommendedName>
    <alternativeName>
        <fullName>OMP decarboxylase</fullName>
        <shortName>OMPDCase</shortName>
        <shortName>OMPdecase</shortName>
    </alternativeName>
    <alternativeName>
        <fullName>Uridine 5'-monophosphate synthase</fullName>
        <shortName>UMP synthase</shortName>
    </alternativeName>
</protein>
<keyword id="KW-0210">Decarboxylase</keyword>
<keyword id="KW-0456">Lyase</keyword>
<keyword id="KW-0665">Pyrimidine biosynthesis</keyword>
<feature type="chain" id="PRO_0000134642" description="Orotidine 5'-phosphate decarboxylase">
    <location>
        <begin position="1"/>
        <end position="277"/>
    </location>
</feature>
<feature type="active site" description="Proton donor" evidence="2">
    <location>
        <position position="95"/>
    </location>
</feature>
<feature type="binding site" evidence="1">
    <location>
        <position position="40"/>
    </location>
    <ligand>
        <name>substrate</name>
    </ligand>
</feature>
<feature type="binding site" evidence="1">
    <location>
        <begin position="62"/>
        <end position="64"/>
    </location>
    <ligand>
        <name>substrate</name>
    </ligand>
</feature>
<feature type="binding site" evidence="1">
    <location>
        <begin position="93"/>
        <end position="102"/>
    </location>
    <ligand>
        <name>substrate</name>
    </ligand>
</feature>
<feature type="binding site" evidence="1">
    <location>
        <position position="229"/>
    </location>
    <ligand>
        <name>substrate</name>
    </ligand>
</feature>
<feature type="binding site" evidence="1">
    <location>
        <position position="247"/>
    </location>
    <ligand>
        <name>substrate</name>
    </ligand>
</feature>
<sequence length="277" mass="30099">MSSKSQLTYTARASKHPNALAKRLFEIAEAKKTNVTVSADVTTTKELLDLADRLGPYIAVIKTHIDILSDFSDETIEGLKALAQKHIFLIFEDRKFIDIGNTVQKQYHRGTLRISEWAHIINCSILPGEGIVEALAQTASAPDFGYGPERGLLILAEMTSKGSLATGQYTTSSVDYARKSKNFVMGFVSTRPLGEVQSEVSSPSDEEDFVVFTTGVNISSKGDKLGQQYQTPASAIGRGADFIIAGRGIYAAPDPVQAAQQYQKEGWEAYLARVGGN</sequence>
<proteinExistence type="inferred from homology"/>
<organism>
    <name type="scientific">Aspergillus kawachii</name>
    <name type="common">White koji mold</name>
    <name type="synonym">Aspergillus awamori var. kawachi</name>
    <dbReference type="NCBI Taxonomy" id="1069201"/>
    <lineage>
        <taxon>Eukaryota</taxon>
        <taxon>Fungi</taxon>
        <taxon>Dikarya</taxon>
        <taxon>Ascomycota</taxon>
        <taxon>Pezizomycotina</taxon>
        <taxon>Eurotiomycetes</taxon>
        <taxon>Eurotiomycetidae</taxon>
        <taxon>Eurotiales</taxon>
        <taxon>Aspergillaceae</taxon>
        <taxon>Aspergillus</taxon>
        <taxon>Aspergillus subgen. Circumdati</taxon>
    </lineage>
</organism>
<accession>Q96WP7</accession>
<dbReference type="EC" id="4.1.1.23"/>
<dbReference type="EMBL" id="AB064659">
    <property type="protein sequence ID" value="BAB62023.1"/>
    <property type="molecule type" value="Genomic_DNA"/>
</dbReference>
<dbReference type="SMR" id="Q96WP7"/>
<dbReference type="VEuPathDB" id="FungiDB:AKAW_04515"/>
<dbReference type="UniPathway" id="UPA00070">
    <property type="reaction ID" value="UER00120"/>
</dbReference>
<dbReference type="GO" id="GO:0004588">
    <property type="term" value="F:orotate phosphoribosyltransferase activity"/>
    <property type="evidence" value="ECO:0007669"/>
    <property type="project" value="TreeGrafter"/>
</dbReference>
<dbReference type="GO" id="GO:0004590">
    <property type="term" value="F:orotidine-5'-phosphate decarboxylase activity"/>
    <property type="evidence" value="ECO:0007669"/>
    <property type="project" value="UniProtKB-EC"/>
</dbReference>
<dbReference type="GO" id="GO:0006207">
    <property type="term" value="P:'de novo' pyrimidine nucleobase biosynthetic process"/>
    <property type="evidence" value="ECO:0007669"/>
    <property type="project" value="InterPro"/>
</dbReference>
<dbReference type="GO" id="GO:0044205">
    <property type="term" value="P:'de novo' UMP biosynthetic process"/>
    <property type="evidence" value="ECO:0007669"/>
    <property type="project" value="UniProtKB-UniPathway"/>
</dbReference>
<dbReference type="CDD" id="cd04725">
    <property type="entry name" value="OMP_decarboxylase_like"/>
    <property type="match status" value="1"/>
</dbReference>
<dbReference type="FunFam" id="3.20.20.70:FF:000114">
    <property type="entry name" value="Decarboxylase,orotidine phosphate"/>
    <property type="match status" value="1"/>
</dbReference>
<dbReference type="Gene3D" id="3.20.20.70">
    <property type="entry name" value="Aldolase class I"/>
    <property type="match status" value="1"/>
</dbReference>
<dbReference type="InterPro" id="IPR013785">
    <property type="entry name" value="Aldolase_TIM"/>
</dbReference>
<dbReference type="InterPro" id="IPR014732">
    <property type="entry name" value="OMPdecase"/>
</dbReference>
<dbReference type="InterPro" id="IPR018089">
    <property type="entry name" value="OMPdecase_AS"/>
</dbReference>
<dbReference type="InterPro" id="IPR001754">
    <property type="entry name" value="OMPdeCOase_dom"/>
</dbReference>
<dbReference type="InterPro" id="IPR011060">
    <property type="entry name" value="RibuloseP-bd_barrel"/>
</dbReference>
<dbReference type="NCBIfam" id="TIGR01740">
    <property type="entry name" value="pyrF"/>
    <property type="match status" value="1"/>
</dbReference>
<dbReference type="PANTHER" id="PTHR19278">
    <property type="entry name" value="OROTATE PHOSPHORIBOSYLTRANSFERASE"/>
    <property type="match status" value="1"/>
</dbReference>
<dbReference type="PANTHER" id="PTHR19278:SF9">
    <property type="entry name" value="URIDINE 5'-MONOPHOSPHATE SYNTHASE"/>
    <property type="match status" value="1"/>
</dbReference>
<dbReference type="Pfam" id="PF00215">
    <property type="entry name" value="OMPdecase"/>
    <property type="match status" value="1"/>
</dbReference>
<dbReference type="SMART" id="SM00934">
    <property type="entry name" value="OMPdecase"/>
    <property type="match status" value="1"/>
</dbReference>
<dbReference type="SUPFAM" id="SSF51366">
    <property type="entry name" value="Ribulose-phoshate binding barrel"/>
    <property type="match status" value="1"/>
</dbReference>
<dbReference type="PROSITE" id="PS00156">
    <property type="entry name" value="OMPDECASE"/>
    <property type="match status" value="1"/>
</dbReference>
<name>PYRF_ASPKA</name>
<comment type="catalytic activity">
    <reaction evidence="2">
        <text>orotidine 5'-phosphate + H(+) = UMP + CO2</text>
        <dbReference type="Rhea" id="RHEA:11596"/>
        <dbReference type="ChEBI" id="CHEBI:15378"/>
        <dbReference type="ChEBI" id="CHEBI:16526"/>
        <dbReference type="ChEBI" id="CHEBI:57538"/>
        <dbReference type="ChEBI" id="CHEBI:57865"/>
        <dbReference type="EC" id="4.1.1.23"/>
    </reaction>
</comment>
<comment type="pathway">
    <text>Pyrimidine metabolism; UMP biosynthesis via de novo pathway; UMP from orotate: step 2/2.</text>
</comment>
<comment type="similarity">
    <text evidence="3">Belongs to the OMP decarboxylase family.</text>
</comment>
<evidence type="ECO:0000250" key="1"/>
<evidence type="ECO:0000255" key="2">
    <source>
        <dbReference type="PROSITE-ProRule" id="PRU10110"/>
    </source>
</evidence>
<evidence type="ECO:0000305" key="3"/>